<dbReference type="EC" id="3.1.3.77" evidence="1"/>
<dbReference type="EMBL" id="CH964272">
    <property type="protein sequence ID" value="EDW84756.1"/>
    <property type="molecule type" value="Genomic_DNA"/>
</dbReference>
<dbReference type="SMR" id="B4NI64"/>
<dbReference type="STRING" id="7260.B4NI64"/>
<dbReference type="EnsemblMetazoa" id="FBtr0244937">
    <property type="protein sequence ID" value="FBpp0243429"/>
    <property type="gene ID" value="FBgn0216292"/>
</dbReference>
<dbReference type="EnsemblMetazoa" id="XM_002073734.3">
    <property type="protein sequence ID" value="XP_002073770.1"/>
    <property type="gene ID" value="LOC6650709"/>
</dbReference>
<dbReference type="GeneID" id="6650709"/>
<dbReference type="KEGG" id="dwi:6650709"/>
<dbReference type="CTD" id="40630"/>
<dbReference type="eggNOG" id="KOG2630">
    <property type="taxonomic scope" value="Eukaryota"/>
</dbReference>
<dbReference type="HOGENOM" id="CLU_023273_0_0_1"/>
<dbReference type="OMA" id="LQGMVWE"/>
<dbReference type="OrthoDB" id="272500at2759"/>
<dbReference type="PhylomeDB" id="B4NI64"/>
<dbReference type="UniPathway" id="UPA00904">
    <property type="reaction ID" value="UER00876"/>
</dbReference>
<dbReference type="UniPathway" id="UPA00904">
    <property type="reaction ID" value="UER00877"/>
</dbReference>
<dbReference type="Proteomes" id="UP000007798">
    <property type="component" value="Unassembled WGS sequence"/>
</dbReference>
<dbReference type="GO" id="GO:0005737">
    <property type="term" value="C:cytoplasm"/>
    <property type="evidence" value="ECO:0007669"/>
    <property type="project" value="UniProtKB-SubCell"/>
</dbReference>
<dbReference type="GO" id="GO:0005634">
    <property type="term" value="C:nucleus"/>
    <property type="evidence" value="ECO:0007669"/>
    <property type="project" value="UniProtKB-SubCell"/>
</dbReference>
<dbReference type="GO" id="GO:0043874">
    <property type="term" value="F:acireductone synthase activity"/>
    <property type="evidence" value="ECO:0007669"/>
    <property type="project" value="UniProtKB-EC"/>
</dbReference>
<dbReference type="GO" id="GO:0000287">
    <property type="term" value="F:magnesium ion binding"/>
    <property type="evidence" value="ECO:0007669"/>
    <property type="project" value="UniProtKB-UniRule"/>
</dbReference>
<dbReference type="GO" id="GO:0019509">
    <property type="term" value="P:L-methionine salvage from methylthioadenosine"/>
    <property type="evidence" value="ECO:0007669"/>
    <property type="project" value="UniProtKB-UniRule"/>
</dbReference>
<dbReference type="CDD" id="cd01629">
    <property type="entry name" value="HAD_EP"/>
    <property type="match status" value="1"/>
</dbReference>
<dbReference type="FunFam" id="3.40.50.1000:FF:000079">
    <property type="entry name" value="Enolase-phosphatase E1"/>
    <property type="match status" value="1"/>
</dbReference>
<dbReference type="Gene3D" id="1.10.720.60">
    <property type="match status" value="1"/>
</dbReference>
<dbReference type="Gene3D" id="3.40.50.1000">
    <property type="entry name" value="HAD superfamily/HAD-like"/>
    <property type="match status" value="1"/>
</dbReference>
<dbReference type="HAMAP" id="MF_01681">
    <property type="entry name" value="Salvage_MtnC"/>
    <property type="match status" value="1"/>
</dbReference>
<dbReference type="HAMAP" id="MF_03117">
    <property type="entry name" value="Salvage_MtnC_euk"/>
    <property type="match status" value="1"/>
</dbReference>
<dbReference type="InterPro" id="IPR023943">
    <property type="entry name" value="Enolase-ppase_E1"/>
</dbReference>
<dbReference type="InterPro" id="IPR027511">
    <property type="entry name" value="ENOPH1_eukaryotes"/>
</dbReference>
<dbReference type="InterPro" id="IPR036412">
    <property type="entry name" value="HAD-like_sf"/>
</dbReference>
<dbReference type="InterPro" id="IPR006439">
    <property type="entry name" value="HAD-SF_hydro_IA"/>
</dbReference>
<dbReference type="InterPro" id="IPR023214">
    <property type="entry name" value="HAD_sf"/>
</dbReference>
<dbReference type="NCBIfam" id="TIGR01691">
    <property type="entry name" value="enolase-ppase"/>
    <property type="match status" value="1"/>
</dbReference>
<dbReference type="NCBIfam" id="TIGR01549">
    <property type="entry name" value="HAD-SF-IA-v1"/>
    <property type="match status" value="1"/>
</dbReference>
<dbReference type="PANTHER" id="PTHR20371">
    <property type="entry name" value="ENOLASE-PHOSPHATASE E1"/>
    <property type="match status" value="1"/>
</dbReference>
<dbReference type="PANTHER" id="PTHR20371:SF1">
    <property type="entry name" value="ENOLASE-PHOSPHATASE E1"/>
    <property type="match status" value="1"/>
</dbReference>
<dbReference type="Pfam" id="PF00702">
    <property type="entry name" value="Hydrolase"/>
    <property type="match status" value="1"/>
</dbReference>
<dbReference type="PRINTS" id="PR00413">
    <property type="entry name" value="HADHALOGNASE"/>
</dbReference>
<dbReference type="SFLD" id="SFLDG01133">
    <property type="entry name" value="C1.5.4:_Enolase-phosphatase_Li"/>
    <property type="match status" value="1"/>
</dbReference>
<dbReference type="SFLD" id="SFLDF00044">
    <property type="entry name" value="enolase-phosphatase"/>
    <property type="match status" value="1"/>
</dbReference>
<dbReference type="SUPFAM" id="SSF56784">
    <property type="entry name" value="HAD-like"/>
    <property type="match status" value="1"/>
</dbReference>
<sequence>MLGNEIKVILLDIEGTTTSIGFVHHILFPYAKQNVEEYLKKEWDSDEIKQIVQDLQQVPSFEVYKATLVDSSASSITVELITGFVRYLIDKDLKVTPLKTLQGLIWANGYESGELKGHVYDDVKEAFEHWNNSGLKLAIYSSGSVAAQKLIFGYSTSGNLLPYLSAHFDTHVGHKQEKDSYINIAKSLETNPEHILFLTDIPGEADAARAAGLQAIILQRFGNAPLTDDEKSLNKIINDFSVLKVDK</sequence>
<proteinExistence type="inferred from homology"/>
<organism>
    <name type="scientific">Drosophila willistoni</name>
    <name type="common">Fruit fly</name>
    <dbReference type="NCBI Taxonomy" id="7260"/>
    <lineage>
        <taxon>Eukaryota</taxon>
        <taxon>Metazoa</taxon>
        <taxon>Ecdysozoa</taxon>
        <taxon>Arthropoda</taxon>
        <taxon>Hexapoda</taxon>
        <taxon>Insecta</taxon>
        <taxon>Pterygota</taxon>
        <taxon>Neoptera</taxon>
        <taxon>Endopterygota</taxon>
        <taxon>Diptera</taxon>
        <taxon>Brachycera</taxon>
        <taxon>Muscomorpha</taxon>
        <taxon>Ephydroidea</taxon>
        <taxon>Drosophilidae</taxon>
        <taxon>Drosophila</taxon>
        <taxon>Sophophora</taxon>
    </lineage>
</organism>
<protein>
    <recommendedName>
        <fullName evidence="1">Enolase-phosphatase E1</fullName>
        <ecNumber evidence="1">3.1.3.77</ecNumber>
    </recommendedName>
    <alternativeName>
        <fullName evidence="1">2,3-diketo-5-methylthio-1-phosphopentane phosphatase</fullName>
    </alternativeName>
</protein>
<evidence type="ECO:0000255" key="1">
    <source>
        <dbReference type="HAMAP-Rule" id="MF_03117"/>
    </source>
</evidence>
<comment type="function">
    <text evidence="1">Bifunctional enzyme that catalyzes the enolization of 2,3-diketo-5-methylthiopentyl-1-phosphate (DK-MTP-1-P) into the intermediate 2-hydroxy-3-keto-5-methylthiopentenyl-1-phosphate (HK-MTPenyl-1-P), which is then dephosphorylated to form the acireductone 1,2-dihydroxy-3-keto-5-methylthiopentene (DHK-MTPene).</text>
</comment>
<comment type="catalytic activity">
    <reaction evidence="1">
        <text>5-methylsulfanyl-2,3-dioxopentyl phosphate + H2O = 1,2-dihydroxy-5-(methylsulfanyl)pent-1-en-3-one + phosphate</text>
        <dbReference type="Rhea" id="RHEA:21700"/>
        <dbReference type="ChEBI" id="CHEBI:15377"/>
        <dbReference type="ChEBI" id="CHEBI:43474"/>
        <dbReference type="ChEBI" id="CHEBI:49252"/>
        <dbReference type="ChEBI" id="CHEBI:58828"/>
        <dbReference type="EC" id="3.1.3.77"/>
    </reaction>
</comment>
<comment type="cofactor">
    <cofactor evidence="1">
        <name>Mg(2+)</name>
        <dbReference type="ChEBI" id="CHEBI:18420"/>
    </cofactor>
    <text evidence="1">Binds 1 Mg(2+) ion per subunit.</text>
</comment>
<comment type="pathway">
    <text evidence="1">Amino-acid biosynthesis; L-methionine biosynthesis via salvage pathway; L-methionine from S-methyl-5-thio-alpha-D-ribose 1-phosphate: step 3/6.</text>
</comment>
<comment type="pathway">
    <text evidence="1">Amino-acid biosynthesis; L-methionine biosynthesis via salvage pathway; L-methionine from S-methyl-5-thio-alpha-D-ribose 1-phosphate: step 4/6.</text>
</comment>
<comment type="subunit">
    <text evidence="1">Monomer.</text>
</comment>
<comment type="subcellular location">
    <subcellularLocation>
        <location evidence="1">Cytoplasm</location>
    </subcellularLocation>
    <subcellularLocation>
        <location evidence="1">Nucleus</location>
    </subcellularLocation>
</comment>
<comment type="similarity">
    <text evidence="1">Belongs to the HAD-like hydrolase superfamily. MasA/MtnC family.</text>
</comment>
<reference key="1">
    <citation type="journal article" date="2007" name="Nature">
        <title>Evolution of genes and genomes on the Drosophila phylogeny.</title>
        <authorList>
            <consortium name="Drosophila 12 genomes consortium"/>
        </authorList>
    </citation>
    <scope>NUCLEOTIDE SEQUENCE [LARGE SCALE GENOMIC DNA]</scope>
    <source>
        <strain>Tucson 14030-0811.24</strain>
    </source>
</reference>
<feature type="chain" id="PRO_0000393986" description="Enolase-phosphatase E1">
    <location>
        <begin position="1"/>
        <end position="247"/>
    </location>
</feature>
<feature type="binding site" evidence="1">
    <location>
        <position position="12"/>
    </location>
    <ligand>
        <name>Mg(2+)</name>
        <dbReference type="ChEBI" id="CHEBI:18420"/>
    </ligand>
</feature>
<feature type="binding site" evidence="1">
    <location>
        <position position="14"/>
    </location>
    <ligand>
        <name>Mg(2+)</name>
        <dbReference type="ChEBI" id="CHEBI:18420"/>
    </ligand>
</feature>
<feature type="binding site" evidence="1">
    <location>
        <begin position="141"/>
        <end position="142"/>
    </location>
    <ligand>
        <name>substrate</name>
    </ligand>
</feature>
<feature type="binding site" evidence="1">
    <location>
        <position position="175"/>
    </location>
    <ligand>
        <name>substrate</name>
    </ligand>
</feature>
<feature type="binding site" evidence="1">
    <location>
        <position position="200"/>
    </location>
    <ligand>
        <name>Mg(2+)</name>
        <dbReference type="ChEBI" id="CHEBI:18420"/>
    </ligand>
</feature>
<gene>
    <name type="ORF">GK14286</name>
</gene>
<name>ENOPH_DROWI</name>
<accession>B4NI64</accession>
<keyword id="KW-0028">Amino-acid biosynthesis</keyword>
<keyword id="KW-0963">Cytoplasm</keyword>
<keyword id="KW-0378">Hydrolase</keyword>
<keyword id="KW-0460">Magnesium</keyword>
<keyword id="KW-0479">Metal-binding</keyword>
<keyword id="KW-0486">Methionine biosynthesis</keyword>
<keyword id="KW-0539">Nucleus</keyword>
<keyword id="KW-1185">Reference proteome</keyword>